<comment type="function">
    <text evidence="1">Catalyzes the folate-dependent formation of 5-methyl-uridine at position 54 (M-5-U54) in all tRNAs.</text>
</comment>
<comment type="catalytic activity">
    <reaction evidence="1">
        <text>uridine(54) in tRNA + (6R)-5,10-methylene-5,6,7,8-tetrahydrofolate + NADH + H(+) = 5-methyluridine(54) in tRNA + (6S)-5,6,7,8-tetrahydrofolate + NAD(+)</text>
        <dbReference type="Rhea" id="RHEA:16873"/>
        <dbReference type="Rhea" id="RHEA-COMP:10167"/>
        <dbReference type="Rhea" id="RHEA-COMP:10193"/>
        <dbReference type="ChEBI" id="CHEBI:15378"/>
        <dbReference type="ChEBI" id="CHEBI:15636"/>
        <dbReference type="ChEBI" id="CHEBI:57453"/>
        <dbReference type="ChEBI" id="CHEBI:57540"/>
        <dbReference type="ChEBI" id="CHEBI:57945"/>
        <dbReference type="ChEBI" id="CHEBI:65315"/>
        <dbReference type="ChEBI" id="CHEBI:74447"/>
        <dbReference type="EC" id="2.1.1.74"/>
    </reaction>
</comment>
<comment type="catalytic activity">
    <reaction evidence="1">
        <text>uridine(54) in tRNA + (6R)-5,10-methylene-5,6,7,8-tetrahydrofolate + NADPH + H(+) = 5-methyluridine(54) in tRNA + (6S)-5,6,7,8-tetrahydrofolate + NADP(+)</text>
        <dbReference type="Rhea" id="RHEA:62372"/>
        <dbReference type="Rhea" id="RHEA-COMP:10167"/>
        <dbReference type="Rhea" id="RHEA-COMP:10193"/>
        <dbReference type="ChEBI" id="CHEBI:15378"/>
        <dbReference type="ChEBI" id="CHEBI:15636"/>
        <dbReference type="ChEBI" id="CHEBI:57453"/>
        <dbReference type="ChEBI" id="CHEBI:57783"/>
        <dbReference type="ChEBI" id="CHEBI:58349"/>
        <dbReference type="ChEBI" id="CHEBI:65315"/>
        <dbReference type="ChEBI" id="CHEBI:74447"/>
        <dbReference type="EC" id="2.1.1.74"/>
    </reaction>
</comment>
<comment type="cofactor">
    <cofactor evidence="1">
        <name>FAD</name>
        <dbReference type="ChEBI" id="CHEBI:57692"/>
    </cofactor>
</comment>
<comment type="subcellular location">
    <subcellularLocation>
        <location evidence="1">Cytoplasm</location>
    </subcellularLocation>
</comment>
<comment type="similarity">
    <text evidence="1">Belongs to the MnmG family. TrmFO subfamily.</text>
</comment>
<keyword id="KW-0963">Cytoplasm</keyword>
<keyword id="KW-0274">FAD</keyword>
<keyword id="KW-0285">Flavoprotein</keyword>
<keyword id="KW-0489">Methyltransferase</keyword>
<keyword id="KW-0520">NAD</keyword>
<keyword id="KW-0521">NADP</keyword>
<keyword id="KW-0808">Transferase</keyword>
<keyword id="KW-0819">tRNA processing</keyword>
<evidence type="ECO:0000255" key="1">
    <source>
        <dbReference type="HAMAP-Rule" id="MF_01037"/>
    </source>
</evidence>
<proteinExistence type="inferred from homology"/>
<sequence>MSQFVNVIGAGLAGSEAAWQIAKRGIKVNLYEMRPVKHTPAHHTDKFAELVCSNSLRANALTNAVGVLKEEMRHLDSAIIAAADESSVPAGGALAVDRHEFAANVTDRVKNHPNVTVFQEEVQSIPEGPTIIATGPLTSEALSKELKSLTGEEYLYFYDAAAPILEKDSIDMDKVYLKSRYDKGEAAYLNCPMTEEEFDRFYEALISAETVPLKEFEKEIFFEGCMPIEVMAKRGKKTMLFGPMKPVGLEDPKTGKRPYAVVQLRQDDAAGTLYNIVGFQTHLKWGDQKEVFRLIPGLEEAEIVRYGVMHRNTFINSPSLLKPTYQFKNREDLFFAGQMTGVEGYVESAASGLVAGINAARFVKGEELVTLPEETAIGSMAYYITSTNKKSFQPMNANFGLLKDLGVRIKNKQERYAEYAKRAIETIQTISKSL</sequence>
<dbReference type="EC" id="2.1.1.74" evidence="1"/>
<dbReference type="EMBL" id="CP000813">
    <property type="protein sequence ID" value="ABV62194.1"/>
    <property type="molecule type" value="Genomic_DNA"/>
</dbReference>
<dbReference type="RefSeq" id="WP_012009948.1">
    <property type="nucleotide sequence ID" value="NC_009848.4"/>
</dbReference>
<dbReference type="SMR" id="A8FD77"/>
<dbReference type="STRING" id="315750.BPUM_1511"/>
<dbReference type="GeneID" id="5620774"/>
<dbReference type="KEGG" id="bpu:BPUM_1511"/>
<dbReference type="eggNOG" id="COG1206">
    <property type="taxonomic scope" value="Bacteria"/>
</dbReference>
<dbReference type="HOGENOM" id="CLU_033057_1_0_9"/>
<dbReference type="OrthoDB" id="9803114at2"/>
<dbReference type="Proteomes" id="UP000001355">
    <property type="component" value="Chromosome"/>
</dbReference>
<dbReference type="GO" id="GO:0005829">
    <property type="term" value="C:cytosol"/>
    <property type="evidence" value="ECO:0007669"/>
    <property type="project" value="TreeGrafter"/>
</dbReference>
<dbReference type="GO" id="GO:0050660">
    <property type="term" value="F:flavin adenine dinucleotide binding"/>
    <property type="evidence" value="ECO:0007669"/>
    <property type="project" value="UniProtKB-UniRule"/>
</dbReference>
<dbReference type="GO" id="GO:0047151">
    <property type="term" value="F:tRNA (uracil(54)-C5)-methyltransferase activity, 5,10-methylenetetrahydrofolate-dependent"/>
    <property type="evidence" value="ECO:0007669"/>
    <property type="project" value="UniProtKB-UniRule"/>
</dbReference>
<dbReference type="GO" id="GO:0030488">
    <property type="term" value="P:tRNA methylation"/>
    <property type="evidence" value="ECO:0007669"/>
    <property type="project" value="TreeGrafter"/>
</dbReference>
<dbReference type="GO" id="GO:0002098">
    <property type="term" value="P:tRNA wobble uridine modification"/>
    <property type="evidence" value="ECO:0007669"/>
    <property type="project" value="TreeGrafter"/>
</dbReference>
<dbReference type="FunFam" id="3.50.50.60:FF:000035">
    <property type="entry name" value="Methylenetetrahydrofolate--tRNA-(uracil-5-)-methyltransferase TrmFO"/>
    <property type="match status" value="1"/>
</dbReference>
<dbReference type="FunFam" id="3.50.50.60:FF:000040">
    <property type="entry name" value="Methylenetetrahydrofolate--tRNA-(uracil-5-)-methyltransferase TrmFO"/>
    <property type="match status" value="1"/>
</dbReference>
<dbReference type="Gene3D" id="3.50.50.60">
    <property type="entry name" value="FAD/NAD(P)-binding domain"/>
    <property type="match status" value="2"/>
</dbReference>
<dbReference type="HAMAP" id="MF_01037">
    <property type="entry name" value="TrmFO"/>
    <property type="match status" value="1"/>
</dbReference>
<dbReference type="InterPro" id="IPR036188">
    <property type="entry name" value="FAD/NAD-bd_sf"/>
</dbReference>
<dbReference type="InterPro" id="IPR002218">
    <property type="entry name" value="MnmG-rel"/>
</dbReference>
<dbReference type="InterPro" id="IPR020595">
    <property type="entry name" value="MnmG-rel_CS"/>
</dbReference>
<dbReference type="InterPro" id="IPR040131">
    <property type="entry name" value="MnmG_N"/>
</dbReference>
<dbReference type="InterPro" id="IPR004417">
    <property type="entry name" value="TrmFO"/>
</dbReference>
<dbReference type="NCBIfam" id="TIGR00137">
    <property type="entry name" value="gid_trmFO"/>
    <property type="match status" value="1"/>
</dbReference>
<dbReference type="NCBIfam" id="NF003739">
    <property type="entry name" value="PRK05335.1"/>
    <property type="match status" value="1"/>
</dbReference>
<dbReference type="PANTHER" id="PTHR11806">
    <property type="entry name" value="GLUCOSE INHIBITED DIVISION PROTEIN A"/>
    <property type="match status" value="1"/>
</dbReference>
<dbReference type="PANTHER" id="PTHR11806:SF2">
    <property type="entry name" value="METHYLENETETRAHYDROFOLATE--TRNA-(URACIL-5-)-METHYLTRANSFERASE TRMFO"/>
    <property type="match status" value="1"/>
</dbReference>
<dbReference type="Pfam" id="PF01134">
    <property type="entry name" value="GIDA"/>
    <property type="match status" value="1"/>
</dbReference>
<dbReference type="SUPFAM" id="SSF51905">
    <property type="entry name" value="FAD/NAD(P)-binding domain"/>
    <property type="match status" value="1"/>
</dbReference>
<dbReference type="PROSITE" id="PS01281">
    <property type="entry name" value="GIDA_2"/>
    <property type="match status" value="1"/>
</dbReference>
<feature type="chain" id="PRO_1000063910" description="Methylenetetrahydrofolate--tRNA-(uracil-5-)-methyltransferase TrmFO">
    <location>
        <begin position="1"/>
        <end position="434"/>
    </location>
</feature>
<feature type="binding site" evidence="1">
    <location>
        <begin position="9"/>
        <end position="14"/>
    </location>
    <ligand>
        <name>FAD</name>
        <dbReference type="ChEBI" id="CHEBI:57692"/>
    </ligand>
</feature>
<reference key="1">
    <citation type="journal article" date="2007" name="PLoS ONE">
        <title>Paradoxical DNA repair and peroxide resistance gene conservation in Bacillus pumilus SAFR-032.</title>
        <authorList>
            <person name="Gioia J."/>
            <person name="Yerrapragada S."/>
            <person name="Qin X."/>
            <person name="Jiang H."/>
            <person name="Igboeli O.C."/>
            <person name="Muzny D."/>
            <person name="Dugan-Rocha S."/>
            <person name="Ding Y."/>
            <person name="Hawes A."/>
            <person name="Liu W."/>
            <person name="Perez L."/>
            <person name="Kovar C."/>
            <person name="Dinh H."/>
            <person name="Lee S."/>
            <person name="Nazareth L."/>
            <person name="Blyth P."/>
            <person name="Holder M."/>
            <person name="Buhay C."/>
            <person name="Tirumalai M.R."/>
            <person name="Liu Y."/>
            <person name="Dasgupta I."/>
            <person name="Bokhetache L."/>
            <person name="Fujita M."/>
            <person name="Karouia F."/>
            <person name="Eswara Moorthy P."/>
            <person name="Siefert J."/>
            <person name="Uzman A."/>
            <person name="Buzumbo P."/>
            <person name="Verma A."/>
            <person name="Zwiya H."/>
            <person name="McWilliams B.D."/>
            <person name="Olowu A."/>
            <person name="Clinkenbeard K.D."/>
            <person name="Newcombe D."/>
            <person name="Golebiewski L."/>
            <person name="Petrosino J.F."/>
            <person name="Nicholson W.L."/>
            <person name="Fox G.E."/>
            <person name="Venkateswaran K."/>
            <person name="Highlander S.K."/>
            <person name="Weinstock G.M."/>
        </authorList>
    </citation>
    <scope>NUCLEOTIDE SEQUENCE [LARGE SCALE GENOMIC DNA]</scope>
    <source>
        <strain>SAFR-032</strain>
    </source>
</reference>
<accession>A8FD77</accession>
<organism>
    <name type="scientific">Bacillus pumilus (strain SAFR-032)</name>
    <dbReference type="NCBI Taxonomy" id="315750"/>
    <lineage>
        <taxon>Bacteria</taxon>
        <taxon>Bacillati</taxon>
        <taxon>Bacillota</taxon>
        <taxon>Bacilli</taxon>
        <taxon>Bacillales</taxon>
        <taxon>Bacillaceae</taxon>
        <taxon>Bacillus</taxon>
    </lineage>
</organism>
<gene>
    <name evidence="1" type="primary">trmFO</name>
    <name type="synonym">gid</name>
    <name type="ordered locus">BPUM_1511</name>
</gene>
<protein>
    <recommendedName>
        <fullName evidence="1">Methylenetetrahydrofolate--tRNA-(uracil-5-)-methyltransferase TrmFO</fullName>
        <ecNumber evidence="1">2.1.1.74</ecNumber>
    </recommendedName>
    <alternativeName>
        <fullName evidence="1">Folate-dependent tRNA (uracil-5-)-methyltransferase</fullName>
    </alternativeName>
    <alternativeName>
        <fullName evidence="1">Folate-dependent tRNA(M-5-U54)-methyltransferase</fullName>
    </alternativeName>
</protein>
<name>TRMFO_BACP2</name>